<keyword id="KW-0028">Amino-acid biosynthesis</keyword>
<keyword id="KW-0223">Dioxygenase</keyword>
<keyword id="KW-0408">Iron</keyword>
<keyword id="KW-0479">Metal-binding</keyword>
<keyword id="KW-0486">Methionine biosynthesis</keyword>
<keyword id="KW-0533">Nickel</keyword>
<keyword id="KW-0560">Oxidoreductase</keyword>
<keyword id="KW-1185">Reference proteome</keyword>
<comment type="function">
    <text evidence="1">Catalyzes 2 different reactions between oxygen and the acireductone 1,2-dihydroxy-3-keto-5-methylthiopentene (DHK-MTPene) depending upon the metal bound in the active site. Fe-containing acireductone dioxygenase (Fe-ARD) produces formate and 2-keto-4-methylthiobutyrate (KMTB), the alpha-ketoacid precursor of methionine in the methionine recycle pathway. Ni-containing acireductone dioxygenase (Ni-ARD) produces methylthiopropionate, carbon monoxide and formate, and does not lie on the methionine recycle pathway.</text>
</comment>
<comment type="catalytic activity">
    <reaction evidence="1">
        <text>1,2-dihydroxy-5-(methylsulfanyl)pent-1-en-3-one + O2 = 3-(methylsulfanyl)propanoate + CO + formate + 2 H(+)</text>
        <dbReference type="Rhea" id="RHEA:14161"/>
        <dbReference type="ChEBI" id="CHEBI:15378"/>
        <dbReference type="ChEBI" id="CHEBI:15379"/>
        <dbReference type="ChEBI" id="CHEBI:15740"/>
        <dbReference type="ChEBI" id="CHEBI:17245"/>
        <dbReference type="ChEBI" id="CHEBI:49016"/>
        <dbReference type="ChEBI" id="CHEBI:49252"/>
        <dbReference type="EC" id="1.13.11.53"/>
    </reaction>
</comment>
<comment type="catalytic activity">
    <reaction evidence="1">
        <text>1,2-dihydroxy-5-(methylsulfanyl)pent-1-en-3-one + O2 = 4-methylsulfanyl-2-oxobutanoate + formate + 2 H(+)</text>
        <dbReference type="Rhea" id="RHEA:24504"/>
        <dbReference type="ChEBI" id="CHEBI:15378"/>
        <dbReference type="ChEBI" id="CHEBI:15379"/>
        <dbReference type="ChEBI" id="CHEBI:15740"/>
        <dbReference type="ChEBI" id="CHEBI:16723"/>
        <dbReference type="ChEBI" id="CHEBI:49252"/>
        <dbReference type="EC" id="1.13.11.54"/>
    </reaction>
</comment>
<comment type="cofactor">
    <cofactor evidence="1">
        <name>Fe(2+)</name>
        <dbReference type="ChEBI" id="CHEBI:29033"/>
    </cofactor>
    <text evidence="1">Binds 1 Fe(2+) cation per monomer.</text>
</comment>
<comment type="cofactor">
    <cofactor evidence="1">
        <name>Ni(2+)</name>
        <dbReference type="ChEBI" id="CHEBI:49786"/>
    </cofactor>
    <text evidence="1">Binds 1 nickel ion per monomer.</text>
</comment>
<comment type="pathway">
    <text evidence="1">Amino-acid biosynthesis; L-methionine biosynthesis via salvage pathway; L-methionine from S-methyl-5-thio-alpha-D-ribose 1-phosphate: step 5/6.</text>
</comment>
<comment type="subunit">
    <text evidence="1">Monomer.</text>
</comment>
<comment type="similarity">
    <text evidence="1">Belongs to the acireductone dioxygenase (ARD) family.</text>
</comment>
<comment type="sequence caution" evidence="2">
    <conflict type="erroneous initiation">
        <sequence resource="EMBL-CDS" id="AAW75392"/>
    </conflict>
</comment>
<dbReference type="EC" id="1.13.11.54" evidence="1"/>
<dbReference type="EC" id="1.13.11.53" evidence="1"/>
<dbReference type="EMBL" id="AE013598">
    <property type="protein sequence ID" value="AAW75392.1"/>
    <property type="status" value="ALT_INIT"/>
    <property type="molecule type" value="Genomic_DNA"/>
</dbReference>
<dbReference type="SMR" id="Q5H0X9"/>
<dbReference type="STRING" id="291331.XOO2138"/>
<dbReference type="KEGG" id="xoo:XOO2138"/>
<dbReference type="HOGENOM" id="CLU_125400_0_0_6"/>
<dbReference type="UniPathway" id="UPA00904">
    <property type="reaction ID" value="UER00878"/>
</dbReference>
<dbReference type="Proteomes" id="UP000006735">
    <property type="component" value="Chromosome"/>
</dbReference>
<dbReference type="GO" id="GO:0010308">
    <property type="term" value="F:acireductone dioxygenase (Ni2+-requiring) activity"/>
    <property type="evidence" value="ECO:0007669"/>
    <property type="project" value="UniProtKB-UniRule"/>
</dbReference>
<dbReference type="GO" id="GO:0010309">
    <property type="term" value="F:acireductone dioxygenase [iron(II)-requiring] activity"/>
    <property type="evidence" value="ECO:0007669"/>
    <property type="project" value="UniProtKB-UniRule"/>
</dbReference>
<dbReference type="GO" id="GO:0005506">
    <property type="term" value="F:iron ion binding"/>
    <property type="evidence" value="ECO:0007669"/>
    <property type="project" value="UniProtKB-UniRule"/>
</dbReference>
<dbReference type="GO" id="GO:0016151">
    <property type="term" value="F:nickel cation binding"/>
    <property type="evidence" value="ECO:0007669"/>
    <property type="project" value="UniProtKB-UniRule"/>
</dbReference>
<dbReference type="GO" id="GO:0019509">
    <property type="term" value="P:L-methionine salvage from methylthioadenosine"/>
    <property type="evidence" value="ECO:0007669"/>
    <property type="project" value="UniProtKB-UniRule"/>
</dbReference>
<dbReference type="GO" id="GO:0019284">
    <property type="term" value="P:L-methionine salvage from S-adenosylmethionine"/>
    <property type="evidence" value="ECO:0007669"/>
    <property type="project" value="InterPro"/>
</dbReference>
<dbReference type="CDD" id="cd02232">
    <property type="entry name" value="cupin_ARD"/>
    <property type="match status" value="1"/>
</dbReference>
<dbReference type="FunFam" id="2.60.120.10:FF:000056">
    <property type="entry name" value="Acireductone dioxygenase"/>
    <property type="match status" value="1"/>
</dbReference>
<dbReference type="Gene3D" id="2.60.120.10">
    <property type="entry name" value="Jelly Rolls"/>
    <property type="match status" value="1"/>
</dbReference>
<dbReference type="HAMAP" id="MF_01682">
    <property type="entry name" value="Salvage_MtnD"/>
    <property type="match status" value="1"/>
</dbReference>
<dbReference type="InterPro" id="IPR004313">
    <property type="entry name" value="ARD"/>
</dbReference>
<dbReference type="InterPro" id="IPR023956">
    <property type="entry name" value="ARD_bac"/>
</dbReference>
<dbReference type="InterPro" id="IPR014710">
    <property type="entry name" value="RmlC-like_jellyroll"/>
</dbReference>
<dbReference type="InterPro" id="IPR011051">
    <property type="entry name" value="RmlC_Cupin_sf"/>
</dbReference>
<dbReference type="PANTHER" id="PTHR23418">
    <property type="entry name" value="ACIREDUCTONE DIOXYGENASE"/>
    <property type="match status" value="1"/>
</dbReference>
<dbReference type="PANTHER" id="PTHR23418:SF0">
    <property type="entry name" value="ACIREDUCTONE DIOXYGENASE"/>
    <property type="match status" value="1"/>
</dbReference>
<dbReference type="Pfam" id="PF03079">
    <property type="entry name" value="ARD"/>
    <property type="match status" value="1"/>
</dbReference>
<dbReference type="SUPFAM" id="SSF51182">
    <property type="entry name" value="RmlC-like cupins"/>
    <property type="match status" value="1"/>
</dbReference>
<sequence>MSRLRIFADTNPATPEFDSRDGDAIASELKKIGVTFERWHASAPVEPGATPEQVMDAYRADIDRISAERGFKTVDVVSIAPDNPKREEMRAKFLDEHFHKEDEVRFFVAGSGLFTLHVDAKVYEIECVKDDLIAVPDSTLHWFDMGPEPHFVAIRFFTEPDGWVGHFTGTEIAKQFPRYAPEKPHKAS</sequence>
<accession>Q5H0X9</accession>
<protein>
    <recommendedName>
        <fullName evidence="1">Acireductone dioxygenase</fullName>
    </recommendedName>
    <alternativeName>
        <fullName evidence="1">1,2-dihydroxy-3-keto-5-methylthiopentene dioxygenase</fullName>
        <shortName evidence="1">DHK-MTPene dioxygenase</shortName>
    </alternativeName>
    <alternativeName>
        <fullName evidence="1">Acireductone dioxygenase (Fe(2+)-requiring)</fullName>
        <shortName evidence="1">ARD'</shortName>
        <shortName evidence="1">Fe-ARD</shortName>
        <ecNumber evidence="1">1.13.11.54</ecNumber>
    </alternativeName>
    <alternativeName>
        <fullName evidence="1">Acireductone dioxygenase (Ni(2+)-requiring)</fullName>
        <shortName evidence="1">ARD</shortName>
        <shortName evidence="1">Ni-ARD</shortName>
        <ecNumber evidence="1">1.13.11.53</ecNumber>
    </alternativeName>
</protein>
<feature type="chain" id="PRO_0000359251" description="Acireductone dioxygenase">
    <location>
        <begin position="1"/>
        <end position="188"/>
    </location>
</feature>
<feature type="binding site" evidence="1">
    <location>
        <position position="97"/>
    </location>
    <ligand>
        <name>Fe(2+)</name>
        <dbReference type="ChEBI" id="CHEBI:29033"/>
    </ligand>
</feature>
<feature type="binding site" evidence="1">
    <location>
        <position position="97"/>
    </location>
    <ligand>
        <name>Ni(2+)</name>
        <dbReference type="ChEBI" id="CHEBI:49786"/>
    </ligand>
</feature>
<feature type="binding site" evidence="1">
    <location>
        <position position="99"/>
    </location>
    <ligand>
        <name>Fe(2+)</name>
        <dbReference type="ChEBI" id="CHEBI:29033"/>
    </ligand>
</feature>
<feature type="binding site" evidence="1">
    <location>
        <position position="99"/>
    </location>
    <ligand>
        <name>Ni(2+)</name>
        <dbReference type="ChEBI" id="CHEBI:49786"/>
    </ligand>
</feature>
<feature type="binding site" evidence="1">
    <location>
        <position position="103"/>
    </location>
    <ligand>
        <name>Fe(2+)</name>
        <dbReference type="ChEBI" id="CHEBI:29033"/>
    </ligand>
</feature>
<feature type="binding site" evidence="1">
    <location>
        <position position="103"/>
    </location>
    <ligand>
        <name>Ni(2+)</name>
        <dbReference type="ChEBI" id="CHEBI:49786"/>
    </ligand>
</feature>
<feature type="binding site" evidence="1">
    <location>
        <position position="141"/>
    </location>
    <ligand>
        <name>Fe(2+)</name>
        <dbReference type="ChEBI" id="CHEBI:29033"/>
    </ligand>
</feature>
<feature type="binding site" evidence="1">
    <location>
        <position position="141"/>
    </location>
    <ligand>
        <name>Ni(2+)</name>
        <dbReference type="ChEBI" id="CHEBI:49786"/>
    </ligand>
</feature>
<feature type="site" description="May play a role in metal incorporation in vivo" evidence="1">
    <location>
        <position position="96"/>
    </location>
</feature>
<feature type="site" description="May play a role in transmitting local conformational changes" evidence="1">
    <location>
        <position position="102"/>
    </location>
</feature>
<feature type="site" description="Important to generate the dianion" evidence="1">
    <location>
        <position position="105"/>
    </location>
</feature>
<reference key="1">
    <citation type="journal article" date="2005" name="Nucleic Acids Res.">
        <title>The genome sequence of Xanthomonas oryzae pathovar oryzae KACC10331, the bacterial blight pathogen of rice.</title>
        <authorList>
            <person name="Lee B.-M."/>
            <person name="Park Y.-J."/>
            <person name="Park D.-S."/>
            <person name="Kang H.-W."/>
            <person name="Kim J.-G."/>
            <person name="Song E.-S."/>
            <person name="Park I.-C."/>
            <person name="Yoon U.-H."/>
            <person name="Hahn J.-H."/>
            <person name="Koo B.-S."/>
            <person name="Lee G.-B."/>
            <person name="Kim H."/>
            <person name="Park H.-S."/>
            <person name="Yoon K.-O."/>
            <person name="Kim J.-H."/>
            <person name="Jung C.-H."/>
            <person name="Koh N.-H."/>
            <person name="Seo J.-S."/>
            <person name="Go S.-J."/>
        </authorList>
    </citation>
    <scope>NUCLEOTIDE SEQUENCE [LARGE SCALE GENOMIC DNA]</scope>
    <source>
        <strain>KACC10331 / KXO85</strain>
    </source>
</reference>
<gene>
    <name evidence="1" type="primary">mtnD</name>
    <name type="ordered locus">XOO2138</name>
</gene>
<name>MTND_XANOR</name>
<organism>
    <name type="scientific">Xanthomonas oryzae pv. oryzae (strain KACC10331 / KXO85)</name>
    <dbReference type="NCBI Taxonomy" id="291331"/>
    <lineage>
        <taxon>Bacteria</taxon>
        <taxon>Pseudomonadati</taxon>
        <taxon>Pseudomonadota</taxon>
        <taxon>Gammaproteobacteria</taxon>
        <taxon>Lysobacterales</taxon>
        <taxon>Lysobacteraceae</taxon>
        <taxon>Xanthomonas</taxon>
    </lineage>
</organism>
<proteinExistence type="inferred from homology"/>
<evidence type="ECO:0000255" key="1">
    <source>
        <dbReference type="HAMAP-Rule" id="MF_01682"/>
    </source>
</evidence>
<evidence type="ECO:0000305" key="2"/>